<reference key="1">
    <citation type="journal article" date="2008" name="ISME J.">
        <title>Comparative genomics of two ecotypes of the marine planktonic copiotroph Alteromonas macleodii suggests alternative lifestyles associated with different kinds of particulate organic matter.</title>
        <authorList>
            <person name="Ivars-Martinez E."/>
            <person name="Martin-Cuadrado A.-B."/>
            <person name="D'Auria G."/>
            <person name="Mira A."/>
            <person name="Ferriera S."/>
            <person name="Johnson J."/>
            <person name="Friedman R."/>
            <person name="Rodriguez-Valera F."/>
        </authorList>
    </citation>
    <scope>NUCLEOTIDE SEQUENCE [LARGE SCALE GENOMIC DNA]</scope>
    <source>
        <strain>DSM 17117 / CIP 110805 / LMG 28347 / Deep ecotype</strain>
    </source>
</reference>
<accession>B4S0Y2</accession>
<accession>F2GAQ2</accession>
<protein>
    <recommendedName>
        <fullName evidence="1">Bifunctional protein GlmU</fullName>
    </recommendedName>
    <domain>
        <recommendedName>
            <fullName evidence="1">UDP-N-acetylglucosamine pyrophosphorylase</fullName>
            <ecNumber evidence="1">2.7.7.23</ecNumber>
        </recommendedName>
        <alternativeName>
            <fullName evidence="1">N-acetylglucosamine-1-phosphate uridyltransferase</fullName>
        </alternativeName>
    </domain>
    <domain>
        <recommendedName>
            <fullName evidence="1">Glucosamine-1-phosphate N-acetyltransferase</fullName>
            <ecNumber evidence="1">2.3.1.157</ecNumber>
        </recommendedName>
    </domain>
</protein>
<feature type="chain" id="PRO_1000186391" description="Bifunctional protein GlmU">
    <location>
        <begin position="1"/>
        <end position="452"/>
    </location>
</feature>
<feature type="region of interest" description="Pyrophosphorylase" evidence="1">
    <location>
        <begin position="1"/>
        <end position="226"/>
    </location>
</feature>
<feature type="region of interest" description="Linker" evidence="1">
    <location>
        <begin position="227"/>
        <end position="247"/>
    </location>
</feature>
<feature type="region of interest" description="N-acetyltransferase" evidence="1">
    <location>
        <begin position="248"/>
        <end position="452"/>
    </location>
</feature>
<feature type="active site" description="Proton acceptor" evidence="1">
    <location>
        <position position="360"/>
    </location>
</feature>
<feature type="binding site" evidence="1">
    <location>
        <begin position="8"/>
        <end position="11"/>
    </location>
    <ligand>
        <name>UDP-N-acetyl-alpha-D-glucosamine</name>
        <dbReference type="ChEBI" id="CHEBI:57705"/>
    </ligand>
</feature>
<feature type="binding site" evidence="1">
    <location>
        <position position="22"/>
    </location>
    <ligand>
        <name>UDP-N-acetyl-alpha-D-glucosamine</name>
        <dbReference type="ChEBI" id="CHEBI:57705"/>
    </ligand>
</feature>
<feature type="binding site" evidence="1">
    <location>
        <position position="73"/>
    </location>
    <ligand>
        <name>UDP-N-acetyl-alpha-D-glucosamine</name>
        <dbReference type="ChEBI" id="CHEBI:57705"/>
    </ligand>
</feature>
<feature type="binding site" evidence="1">
    <location>
        <begin position="78"/>
        <end position="79"/>
    </location>
    <ligand>
        <name>UDP-N-acetyl-alpha-D-glucosamine</name>
        <dbReference type="ChEBI" id="CHEBI:57705"/>
    </ligand>
</feature>
<feature type="binding site" evidence="1">
    <location>
        <position position="102"/>
    </location>
    <ligand>
        <name>Mg(2+)</name>
        <dbReference type="ChEBI" id="CHEBI:18420"/>
    </ligand>
</feature>
<feature type="binding site" evidence="1">
    <location>
        <position position="137"/>
    </location>
    <ligand>
        <name>UDP-N-acetyl-alpha-D-glucosamine</name>
        <dbReference type="ChEBI" id="CHEBI:57705"/>
    </ligand>
</feature>
<feature type="binding site" evidence="1">
    <location>
        <position position="151"/>
    </location>
    <ligand>
        <name>UDP-N-acetyl-alpha-D-glucosamine</name>
        <dbReference type="ChEBI" id="CHEBI:57705"/>
    </ligand>
</feature>
<feature type="binding site" evidence="1">
    <location>
        <position position="166"/>
    </location>
    <ligand>
        <name>UDP-N-acetyl-alpha-D-glucosamine</name>
        <dbReference type="ChEBI" id="CHEBI:57705"/>
    </ligand>
</feature>
<feature type="binding site" evidence="1">
    <location>
        <position position="224"/>
    </location>
    <ligand>
        <name>Mg(2+)</name>
        <dbReference type="ChEBI" id="CHEBI:18420"/>
    </ligand>
</feature>
<feature type="binding site" evidence="1">
    <location>
        <position position="224"/>
    </location>
    <ligand>
        <name>UDP-N-acetyl-alpha-D-glucosamine</name>
        <dbReference type="ChEBI" id="CHEBI:57705"/>
    </ligand>
</feature>
<feature type="binding site" evidence="1">
    <location>
        <position position="330"/>
    </location>
    <ligand>
        <name>UDP-N-acetyl-alpha-D-glucosamine</name>
        <dbReference type="ChEBI" id="CHEBI:57705"/>
    </ligand>
</feature>
<feature type="binding site" evidence="1">
    <location>
        <position position="348"/>
    </location>
    <ligand>
        <name>UDP-N-acetyl-alpha-D-glucosamine</name>
        <dbReference type="ChEBI" id="CHEBI:57705"/>
    </ligand>
</feature>
<feature type="binding site" evidence="1">
    <location>
        <position position="363"/>
    </location>
    <ligand>
        <name>UDP-N-acetyl-alpha-D-glucosamine</name>
        <dbReference type="ChEBI" id="CHEBI:57705"/>
    </ligand>
</feature>
<feature type="binding site" evidence="1">
    <location>
        <position position="374"/>
    </location>
    <ligand>
        <name>UDP-N-acetyl-alpha-D-glucosamine</name>
        <dbReference type="ChEBI" id="CHEBI:57705"/>
    </ligand>
</feature>
<feature type="binding site" evidence="1">
    <location>
        <position position="377"/>
    </location>
    <ligand>
        <name>acetyl-CoA</name>
        <dbReference type="ChEBI" id="CHEBI:57288"/>
    </ligand>
</feature>
<feature type="binding site" evidence="1">
    <location>
        <begin position="383"/>
        <end position="384"/>
    </location>
    <ligand>
        <name>acetyl-CoA</name>
        <dbReference type="ChEBI" id="CHEBI:57288"/>
    </ligand>
</feature>
<feature type="binding site" evidence="1">
    <location>
        <position position="402"/>
    </location>
    <ligand>
        <name>acetyl-CoA</name>
        <dbReference type="ChEBI" id="CHEBI:57288"/>
    </ligand>
</feature>
<feature type="binding site" evidence="1">
    <location>
        <position position="420"/>
    </location>
    <ligand>
        <name>acetyl-CoA</name>
        <dbReference type="ChEBI" id="CHEBI:57288"/>
    </ligand>
</feature>
<feature type="binding site" evidence="1">
    <location>
        <position position="437"/>
    </location>
    <ligand>
        <name>acetyl-CoA</name>
        <dbReference type="ChEBI" id="CHEBI:57288"/>
    </ligand>
</feature>
<sequence>MAFSVVVLAAGKGTRMKSSLPKVLHKVGGVPMVQRIINTVRSLGADNIHLVYGHGGDQLKATVVEENLNWCLQAEQLGTGHAVQQAAPHINDDEDVLILVGDAPLIREDTLSALKAVKESCDLALLTVNLDDPTGMGRIIRENDNITAIVEHKDATEAQRAIKEINTGMMMMSGADLKRWLGELSNDNAQGEYYLTDVIAMAASEGKRIQSAQPQSAVEVEGVNNRLQLANLERALQNRQADELMTNGVTLLDPSRFDLRGTLQTGNDVIIDVNVIVEGDVTLGNNVEIGANCILRNCTIADNAVIEANSIIEEARVGEACTVGPYARLRPGAVMQKNAKVGNFVEMKKAVLGEGAKANHLTYLGDAEVGAKANIGAGTITCNYDGVNKSKTVIGENAFIGSNSSLVAPVNIGKGATVGAGSVITSTVDEAALAVARGKQRNIPNWPRPTKK</sequence>
<gene>
    <name evidence="1" type="primary">glmU</name>
    <name type="ordered locus">MADE_1019470</name>
</gene>
<comment type="function">
    <text evidence="1">Catalyzes the last two sequential reactions in the de novo biosynthetic pathway for UDP-N-acetylglucosamine (UDP-GlcNAc). The C-terminal domain catalyzes the transfer of acetyl group from acetyl coenzyme A to glucosamine-1-phosphate (GlcN-1-P) to produce N-acetylglucosamine-1-phosphate (GlcNAc-1-P), which is converted into UDP-GlcNAc by the transfer of uridine 5-monophosphate (from uridine 5-triphosphate), a reaction catalyzed by the N-terminal domain.</text>
</comment>
<comment type="catalytic activity">
    <reaction evidence="1">
        <text>alpha-D-glucosamine 1-phosphate + acetyl-CoA = N-acetyl-alpha-D-glucosamine 1-phosphate + CoA + H(+)</text>
        <dbReference type="Rhea" id="RHEA:13725"/>
        <dbReference type="ChEBI" id="CHEBI:15378"/>
        <dbReference type="ChEBI" id="CHEBI:57287"/>
        <dbReference type="ChEBI" id="CHEBI:57288"/>
        <dbReference type="ChEBI" id="CHEBI:57776"/>
        <dbReference type="ChEBI" id="CHEBI:58516"/>
        <dbReference type="EC" id="2.3.1.157"/>
    </reaction>
</comment>
<comment type="catalytic activity">
    <reaction evidence="1">
        <text>N-acetyl-alpha-D-glucosamine 1-phosphate + UTP + H(+) = UDP-N-acetyl-alpha-D-glucosamine + diphosphate</text>
        <dbReference type="Rhea" id="RHEA:13509"/>
        <dbReference type="ChEBI" id="CHEBI:15378"/>
        <dbReference type="ChEBI" id="CHEBI:33019"/>
        <dbReference type="ChEBI" id="CHEBI:46398"/>
        <dbReference type="ChEBI" id="CHEBI:57705"/>
        <dbReference type="ChEBI" id="CHEBI:57776"/>
        <dbReference type="EC" id="2.7.7.23"/>
    </reaction>
</comment>
<comment type="cofactor">
    <cofactor evidence="1">
        <name>Mg(2+)</name>
        <dbReference type="ChEBI" id="CHEBI:18420"/>
    </cofactor>
    <text evidence="1">Binds 1 Mg(2+) ion per subunit.</text>
</comment>
<comment type="pathway">
    <text evidence="1">Nucleotide-sugar biosynthesis; UDP-N-acetyl-alpha-D-glucosamine biosynthesis; N-acetyl-alpha-D-glucosamine 1-phosphate from alpha-D-glucosamine 6-phosphate (route II): step 2/2.</text>
</comment>
<comment type="pathway">
    <text evidence="1">Nucleotide-sugar biosynthesis; UDP-N-acetyl-alpha-D-glucosamine biosynthesis; UDP-N-acetyl-alpha-D-glucosamine from N-acetyl-alpha-D-glucosamine 1-phosphate: step 1/1.</text>
</comment>
<comment type="pathway">
    <text evidence="1">Bacterial outer membrane biogenesis; LPS lipid A biosynthesis.</text>
</comment>
<comment type="subunit">
    <text evidence="1">Homotrimer.</text>
</comment>
<comment type="subcellular location">
    <subcellularLocation>
        <location evidence="1">Cytoplasm</location>
    </subcellularLocation>
</comment>
<comment type="similarity">
    <text evidence="1">In the N-terminal section; belongs to the N-acetylglucosamine-1-phosphate uridyltransferase family.</text>
</comment>
<comment type="similarity">
    <text evidence="1">In the C-terminal section; belongs to the transferase hexapeptide repeat family.</text>
</comment>
<keyword id="KW-0012">Acyltransferase</keyword>
<keyword id="KW-0133">Cell shape</keyword>
<keyword id="KW-0961">Cell wall biogenesis/degradation</keyword>
<keyword id="KW-0963">Cytoplasm</keyword>
<keyword id="KW-0460">Magnesium</keyword>
<keyword id="KW-0479">Metal-binding</keyword>
<keyword id="KW-0511">Multifunctional enzyme</keyword>
<keyword id="KW-0548">Nucleotidyltransferase</keyword>
<keyword id="KW-0573">Peptidoglycan synthesis</keyword>
<keyword id="KW-0677">Repeat</keyword>
<keyword id="KW-0808">Transferase</keyword>
<name>GLMU_ALTMD</name>
<dbReference type="EC" id="2.7.7.23" evidence="1"/>
<dbReference type="EC" id="2.3.1.157" evidence="1"/>
<dbReference type="EMBL" id="CP001103">
    <property type="protein sequence ID" value="AEB00017.1"/>
    <property type="molecule type" value="Genomic_DNA"/>
</dbReference>
<dbReference type="RefSeq" id="WP_012520056.1">
    <property type="nucleotide sequence ID" value="NC_011138.3"/>
</dbReference>
<dbReference type="SMR" id="B4S0Y2"/>
<dbReference type="KEGG" id="amc:MADE_1019470"/>
<dbReference type="HOGENOM" id="CLU_029499_15_2_6"/>
<dbReference type="UniPathway" id="UPA00113">
    <property type="reaction ID" value="UER00532"/>
</dbReference>
<dbReference type="UniPathway" id="UPA00113">
    <property type="reaction ID" value="UER00533"/>
</dbReference>
<dbReference type="UniPathway" id="UPA00973"/>
<dbReference type="Proteomes" id="UP000001870">
    <property type="component" value="Chromosome"/>
</dbReference>
<dbReference type="GO" id="GO:0005737">
    <property type="term" value="C:cytoplasm"/>
    <property type="evidence" value="ECO:0007669"/>
    <property type="project" value="UniProtKB-SubCell"/>
</dbReference>
<dbReference type="GO" id="GO:0016020">
    <property type="term" value="C:membrane"/>
    <property type="evidence" value="ECO:0007669"/>
    <property type="project" value="GOC"/>
</dbReference>
<dbReference type="GO" id="GO:0019134">
    <property type="term" value="F:glucosamine-1-phosphate N-acetyltransferase activity"/>
    <property type="evidence" value="ECO:0007669"/>
    <property type="project" value="UniProtKB-UniRule"/>
</dbReference>
<dbReference type="GO" id="GO:0000287">
    <property type="term" value="F:magnesium ion binding"/>
    <property type="evidence" value="ECO:0007669"/>
    <property type="project" value="UniProtKB-UniRule"/>
</dbReference>
<dbReference type="GO" id="GO:0003977">
    <property type="term" value="F:UDP-N-acetylglucosamine diphosphorylase activity"/>
    <property type="evidence" value="ECO:0007669"/>
    <property type="project" value="UniProtKB-UniRule"/>
</dbReference>
<dbReference type="GO" id="GO:0000902">
    <property type="term" value="P:cell morphogenesis"/>
    <property type="evidence" value="ECO:0007669"/>
    <property type="project" value="UniProtKB-UniRule"/>
</dbReference>
<dbReference type="GO" id="GO:0071555">
    <property type="term" value="P:cell wall organization"/>
    <property type="evidence" value="ECO:0007669"/>
    <property type="project" value="UniProtKB-KW"/>
</dbReference>
<dbReference type="GO" id="GO:0009245">
    <property type="term" value="P:lipid A biosynthetic process"/>
    <property type="evidence" value="ECO:0007669"/>
    <property type="project" value="UniProtKB-UniRule"/>
</dbReference>
<dbReference type="GO" id="GO:0009252">
    <property type="term" value="P:peptidoglycan biosynthetic process"/>
    <property type="evidence" value="ECO:0007669"/>
    <property type="project" value="UniProtKB-UniRule"/>
</dbReference>
<dbReference type="GO" id="GO:0008360">
    <property type="term" value="P:regulation of cell shape"/>
    <property type="evidence" value="ECO:0007669"/>
    <property type="project" value="UniProtKB-KW"/>
</dbReference>
<dbReference type="GO" id="GO:0006048">
    <property type="term" value="P:UDP-N-acetylglucosamine biosynthetic process"/>
    <property type="evidence" value="ECO:0007669"/>
    <property type="project" value="UniProtKB-UniPathway"/>
</dbReference>
<dbReference type="CDD" id="cd02540">
    <property type="entry name" value="GT2_GlmU_N_bac"/>
    <property type="match status" value="1"/>
</dbReference>
<dbReference type="CDD" id="cd03353">
    <property type="entry name" value="LbH_GlmU_C"/>
    <property type="match status" value="1"/>
</dbReference>
<dbReference type="FunFam" id="3.90.550.10:FF:000006">
    <property type="entry name" value="Bifunctional protein GlmU"/>
    <property type="match status" value="1"/>
</dbReference>
<dbReference type="Gene3D" id="2.160.10.10">
    <property type="entry name" value="Hexapeptide repeat proteins"/>
    <property type="match status" value="1"/>
</dbReference>
<dbReference type="Gene3D" id="3.90.550.10">
    <property type="entry name" value="Spore Coat Polysaccharide Biosynthesis Protein SpsA, Chain A"/>
    <property type="match status" value="1"/>
</dbReference>
<dbReference type="HAMAP" id="MF_01631">
    <property type="entry name" value="GlmU"/>
    <property type="match status" value="1"/>
</dbReference>
<dbReference type="InterPro" id="IPR005882">
    <property type="entry name" value="Bifunctional_GlmU"/>
</dbReference>
<dbReference type="InterPro" id="IPR050065">
    <property type="entry name" value="GlmU-like"/>
</dbReference>
<dbReference type="InterPro" id="IPR038009">
    <property type="entry name" value="GlmU_C_LbH"/>
</dbReference>
<dbReference type="InterPro" id="IPR001451">
    <property type="entry name" value="Hexapep"/>
</dbReference>
<dbReference type="InterPro" id="IPR018357">
    <property type="entry name" value="Hexapep_transf_CS"/>
</dbReference>
<dbReference type="InterPro" id="IPR025877">
    <property type="entry name" value="MobA-like_NTP_Trfase"/>
</dbReference>
<dbReference type="InterPro" id="IPR029044">
    <property type="entry name" value="Nucleotide-diphossugar_trans"/>
</dbReference>
<dbReference type="InterPro" id="IPR011004">
    <property type="entry name" value="Trimer_LpxA-like_sf"/>
</dbReference>
<dbReference type="NCBIfam" id="TIGR01173">
    <property type="entry name" value="glmU"/>
    <property type="match status" value="1"/>
</dbReference>
<dbReference type="NCBIfam" id="NF010933">
    <property type="entry name" value="PRK14353.1"/>
    <property type="match status" value="1"/>
</dbReference>
<dbReference type="PANTHER" id="PTHR43584:SF3">
    <property type="entry name" value="BIFUNCTIONAL PROTEIN GLMU"/>
    <property type="match status" value="1"/>
</dbReference>
<dbReference type="PANTHER" id="PTHR43584">
    <property type="entry name" value="NUCLEOTIDYL TRANSFERASE"/>
    <property type="match status" value="1"/>
</dbReference>
<dbReference type="Pfam" id="PF14602">
    <property type="entry name" value="Hexapep_2"/>
    <property type="match status" value="2"/>
</dbReference>
<dbReference type="Pfam" id="PF12804">
    <property type="entry name" value="NTP_transf_3"/>
    <property type="match status" value="1"/>
</dbReference>
<dbReference type="SUPFAM" id="SSF53448">
    <property type="entry name" value="Nucleotide-diphospho-sugar transferases"/>
    <property type="match status" value="1"/>
</dbReference>
<dbReference type="SUPFAM" id="SSF51161">
    <property type="entry name" value="Trimeric LpxA-like enzymes"/>
    <property type="match status" value="1"/>
</dbReference>
<dbReference type="PROSITE" id="PS00101">
    <property type="entry name" value="HEXAPEP_TRANSFERASES"/>
    <property type="match status" value="1"/>
</dbReference>
<proteinExistence type="inferred from homology"/>
<evidence type="ECO:0000255" key="1">
    <source>
        <dbReference type="HAMAP-Rule" id="MF_01631"/>
    </source>
</evidence>
<organism>
    <name type="scientific">Alteromonas mediterranea (strain DSM 17117 / CIP 110805 / LMG 28347 / Deep ecotype)</name>
    <dbReference type="NCBI Taxonomy" id="1774373"/>
    <lineage>
        <taxon>Bacteria</taxon>
        <taxon>Pseudomonadati</taxon>
        <taxon>Pseudomonadota</taxon>
        <taxon>Gammaproteobacteria</taxon>
        <taxon>Alteromonadales</taxon>
        <taxon>Alteromonadaceae</taxon>
        <taxon>Alteromonas/Salinimonas group</taxon>
        <taxon>Alteromonas</taxon>
    </lineage>
</organism>